<organism>
    <name type="scientific">Pelobacter propionicus (strain DSM 2379 / NBRC 103807 / OttBd1)</name>
    <dbReference type="NCBI Taxonomy" id="338966"/>
    <lineage>
        <taxon>Bacteria</taxon>
        <taxon>Pseudomonadati</taxon>
        <taxon>Thermodesulfobacteriota</taxon>
        <taxon>Desulfuromonadia</taxon>
        <taxon>Desulfuromonadales</taxon>
        <taxon>Desulfuromonadaceae</taxon>
        <taxon>Pelobacter</taxon>
    </lineage>
</organism>
<feature type="chain" id="PRO_1000091885" description="3-deoxy-manno-octulosonate cytidylyltransferase">
    <location>
        <begin position="1"/>
        <end position="255"/>
    </location>
</feature>
<gene>
    <name evidence="1" type="primary">kdsB</name>
    <name type="ordered locus">Ppro_1613</name>
</gene>
<reference key="1">
    <citation type="submission" date="2006-10" db="EMBL/GenBank/DDBJ databases">
        <title>Complete sequence of chromosome of Pelobacter propionicus DSM 2379.</title>
        <authorList>
            <consortium name="US DOE Joint Genome Institute"/>
            <person name="Copeland A."/>
            <person name="Lucas S."/>
            <person name="Lapidus A."/>
            <person name="Barry K."/>
            <person name="Detter J.C."/>
            <person name="Glavina del Rio T."/>
            <person name="Hammon N."/>
            <person name="Israni S."/>
            <person name="Dalin E."/>
            <person name="Tice H."/>
            <person name="Pitluck S."/>
            <person name="Saunders E."/>
            <person name="Brettin T."/>
            <person name="Bruce D."/>
            <person name="Han C."/>
            <person name="Tapia R."/>
            <person name="Schmutz J."/>
            <person name="Larimer F."/>
            <person name="Land M."/>
            <person name="Hauser L."/>
            <person name="Kyrpides N."/>
            <person name="Kim E."/>
            <person name="Lovley D."/>
            <person name="Richardson P."/>
        </authorList>
    </citation>
    <scope>NUCLEOTIDE SEQUENCE [LARGE SCALE GENOMIC DNA]</scope>
    <source>
        <strain>DSM 2379 / NBRC 103807 / OttBd1</strain>
    </source>
</reference>
<keyword id="KW-0963">Cytoplasm</keyword>
<keyword id="KW-0448">Lipopolysaccharide biosynthesis</keyword>
<keyword id="KW-0548">Nucleotidyltransferase</keyword>
<keyword id="KW-1185">Reference proteome</keyword>
<keyword id="KW-0808">Transferase</keyword>
<accession>A1APF8</accession>
<dbReference type="EC" id="2.7.7.38" evidence="1"/>
<dbReference type="EMBL" id="CP000482">
    <property type="protein sequence ID" value="ABK99228.1"/>
    <property type="molecule type" value="Genomic_DNA"/>
</dbReference>
<dbReference type="RefSeq" id="WP_011735518.1">
    <property type="nucleotide sequence ID" value="NC_008609.1"/>
</dbReference>
<dbReference type="SMR" id="A1APF8"/>
<dbReference type="STRING" id="338966.Ppro_1613"/>
<dbReference type="KEGG" id="ppd:Ppro_1613"/>
<dbReference type="eggNOG" id="COG1212">
    <property type="taxonomic scope" value="Bacteria"/>
</dbReference>
<dbReference type="HOGENOM" id="CLU_065038_0_1_7"/>
<dbReference type="OrthoDB" id="9815559at2"/>
<dbReference type="UniPathway" id="UPA00030"/>
<dbReference type="UniPathway" id="UPA00358">
    <property type="reaction ID" value="UER00476"/>
</dbReference>
<dbReference type="Proteomes" id="UP000006732">
    <property type="component" value="Chromosome"/>
</dbReference>
<dbReference type="GO" id="GO:0005829">
    <property type="term" value="C:cytosol"/>
    <property type="evidence" value="ECO:0007669"/>
    <property type="project" value="TreeGrafter"/>
</dbReference>
<dbReference type="GO" id="GO:0008690">
    <property type="term" value="F:3-deoxy-manno-octulosonate cytidylyltransferase activity"/>
    <property type="evidence" value="ECO:0007669"/>
    <property type="project" value="UniProtKB-UniRule"/>
</dbReference>
<dbReference type="GO" id="GO:0033468">
    <property type="term" value="P:CMP-keto-3-deoxy-D-manno-octulosonic acid biosynthetic process"/>
    <property type="evidence" value="ECO:0007669"/>
    <property type="project" value="UniProtKB-UniRule"/>
</dbReference>
<dbReference type="GO" id="GO:0009103">
    <property type="term" value="P:lipopolysaccharide biosynthetic process"/>
    <property type="evidence" value="ECO:0007669"/>
    <property type="project" value="UniProtKB-UniRule"/>
</dbReference>
<dbReference type="CDD" id="cd02517">
    <property type="entry name" value="CMP-KDO-Synthetase"/>
    <property type="match status" value="1"/>
</dbReference>
<dbReference type="FunFam" id="3.90.550.10:FF:000011">
    <property type="entry name" value="3-deoxy-manno-octulosonate cytidylyltransferase"/>
    <property type="match status" value="1"/>
</dbReference>
<dbReference type="Gene3D" id="3.90.550.10">
    <property type="entry name" value="Spore Coat Polysaccharide Biosynthesis Protein SpsA, Chain A"/>
    <property type="match status" value="1"/>
</dbReference>
<dbReference type="HAMAP" id="MF_00057">
    <property type="entry name" value="KdsB"/>
    <property type="match status" value="1"/>
</dbReference>
<dbReference type="InterPro" id="IPR003329">
    <property type="entry name" value="Cytidylyl_trans"/>
</dbReference>
<dbReference type="InterPro" id="IPR004528">
    <property type="entry name" value="KdsB"/>
</dbReference>
<dbReference type="InterPro" id="IPR029044">
    <property type="entry name" value="Nucleotide-diphossugar_trans"/>
</dbReference>
<dbReference type="NCBIfam" id="TIGR00466">
    <property type="entry name" value="kdsB"/>
    <property type="match status" value="1"/>
</dbReference>
<dbReference type="NCBIfam" id="NF003950">
    <property type="entry name" value="PRK05450.1-3"/>
    <property type="match status" value="1"/>
</dbReference>
<dbReference type="NCBIfam" id="NF003952">
    <property type="entry name" value="PRK05450.1-5"/>
    <property type="match status" value="1"/>
</dbReference>
<dbReference type="NCBIfam" id="NF009905">
    <property type="entry name" value="PRK13368.1"/>
    <property type="match status" value="1"/>
</dbReference>
<dbReference type="PANTHER" id="PTHR42866">
    <property type="entry name" value="3-DEOXY-MANNO-OCTULOSONATE CYTIDYLYLTRANSFERASE"/>
    <property type="match status" value="1"/>
</dbReference>
<dbReference type="PANTHER" id="PTHR42866:SF2">
    <property type="entry name" value="3-DEOXY-MANNO-OCTULOSONATE CYTIDYLYLTRANSFERASE, MITOCHONDRIAL"/>
    <property type="match status" value="1"/>
</dbReference>
<dbReference type="Pfam" id="PF02348">
    <property type="entry name" value="CTP_transf_3"/>
    <property type="match status" value="1"/>
</dbReference>
<dbReference type="SUPFAM" id="SSF53448">
    <property type="entry name" value="Nucleotide-diphospho-sugar transferases"/>
    <property type="match status" value="1"/>
</dbReference>
<proteinExistence type="inferred from homology"/>
<sequence length="255" mass="28657">MNITAVIPARFASVRFPGKALAIIDGKPMIQHVYERTARASLVDSVIIATDDERIQQAVSVFGGVCRMTRNDHETGTDRLAEVAGTLSADIIVNVQGDEPLIAPEMIDQAIRPLLDDPSLRMATLKSRIRCLHDFLSPNVVKVVTDRDGNALYFSRSPLPFFRDKWQDLKDESFASGKLLCYKHVGLYVYRRDFLVEFAAMAPTFLETSEKLEQLRALENGARIRVVETEFESIGVDTPDDLVKARERFRAIQSK</sequence>
<comment type="function">
    <text evidence="1">Activates KDO (a required 8-carbon sugar) for incorporation into bacterial lipopolysaccharide in Gram-negative bacteria.</text>
</comment>
<comment type="catalytic activity">
    <reaction evidence="1">
        <text>3-deoxy-alpha-D-manno-oct-2-ulosonate + CTP = CMP-3-deoxy-beta-D-manno-octulosonate + diphosphate</text>
        <dbReference type="Rhea" id="RHEA:23448"/>
        <dbReference type="ChEBI" id="CHEBI:33019"/>
        <dbReference type="ChEBI" id="CHEBI:37563"/>
        <dbReference type="ChEBI" id="CHEBI:85986"/>
        <dbReference type="ChEBI" id="CHEBI:85987"/>
        <dbReference type="EC" id="2.7.7.38"/>
    </reaction>
</comment>
<comment type="pathway">
    <text evidence="1">Nucleotide-sugar biosynthesis; CMP-3-deoxy-D-manno-octulosonate biosynthesis; CMP-3-deoxy-D-manno-octulosonate from 3-deoxy-D-manno-octulosonate and CTP: step 1/1.</text>
</comment>
<comment type="pathway">
    <text evidence="1">Bacterial outer membrane biogenesis; lipopolysaccharide biosynthesis.</text>
</comment>
<comment type="subcellular location">
    <subcellularLocation>
        <location evidence="1">Cytoplasm</location>
    </subcellularLocation>
</comment>
<comment type="similarity">
    <text evidence="1">Belongs to the KdsB family.</text>
</comment>
<name>KDSB_PELPD</name>
<protein>
    <recommendedName>
        <fullName evidence="1">3-deoxy-manno-octulosonate cytidylyltransferase</fullName>
        <ecNumber evidence="1">2.7.7.38</ecNumber>
    </recommendedName>
    <alternativeName>
        <fullName evidence="1">CMP-2-keto-3-deoxyoctulosonic acid synthase</fullName>
        <shortName evidence="1">CKS</shortName>
        <shortName evidence="1">CMP-KDO synthase</shortName>
    </alternativeName>
</protein>
<evidence type="ECO:0000255" key="1">
    <source>
        <dbReference type="HAMAP-Rule" id="MF_00057"/>
    </source>
</evidence>